<evidence type="ECO:0000255" key="1">
    <source>
        <dbReference type="HAMAP-Rule" id="MF_00073"/>
    </source>
</evidence>
<reference key="1">
    <citation type="journal article" date="2009" name="J. Bacteriol.">
        <title>Complete genome sequence of Macrococcus caseolyticus strain JCSCS5402, reflecting the ancestral genome of the human-pathogenic staphylococci.</title>
        <authorList>
            <person name="Baba T."/>
            <person name="Kuwahara-Arai K."/>
            <person name="Uchiyama I."/>
            <person name="Takeuchi F."/>
            <person name="Ito T."/>
            <person name="Hiramatsu K."/>
        </authorList>
    </citation>
    <scope>NUCLEOTIDE SEQUENCE [LARGE SCALE GENOMIC DNA]</scope>
    <source>
        <strain>JCSC5402</strain>
    </source>
</reference>
<protein>
    <recommendedName>
        <fullName evidence="1">Transcription antitermination protein NusB</fullName>
    </recommendedName>
    <alternativeName>
        <fullName evidence="1">Antitermination factor NusB</fullName>
    </alternativeName>
</protein>
<feature type="chain" id="PRO_1000192447" description="Transcription antitermination protein NusB">
    <location>
        <begin position="1"/>
        <end position="130"/>
    </location>
</feature>
<gene>
    <name evidence="1" type="primary">nusB</name>
    <name type="ordered locus">MCCL_1170</name>
</gene>
<keyword id="KW-1185">Reference proteome</keyword>
<keyword id="KW-0694">RNA-binding</keyword>
<keyword id="KW-0804">Transcription</keyword>
<keyword id="KW-0889">Transcription antitermination</keyword>
<keyword id="KW-0805">Transcription regulation</keyword>
<dbReference type="EMBL" id="AP009484">
    <property type="protein sequence ID" value="BAH17877.1"/>
    <property type="molecule type" value="Genomic_DNA"/>
</dbReference>
<dbReference type="RefSeq" id="WP_012657075.1">
    <property type="nucleotide sequence ID" value="NC_011999.1"/>
</dbReference>
<dbReference type="SMR" id="B9E6Q9"/>
<dbReference type="STRING" id="458233.MCCL_1170"/>
<dbReference type="KEGG" id="mcl:MCCL_1170"/>
<dbReference type="eggNOG" id="COG0781">
    <property type="taxonomic scope" value="Bacteria"/>
</dbReference>
<dbReference type="HOGENOM" id="CLU_087843_3_2_9"/>
<dbReference type="OrthoDB" id="9811381at2"/>
<dbReference type="Proteomes" id="UP000001383">
    <property type="component" value="Chromosome"/>
</dbReference>
<dbReference type="GO" id="GO:0005829">
    <property type="term" value="C:cytosol"/>
    <property type="evidence" value="ECO:0007669"/>
    <property type="project" value="TreeGrafter"/>
</dbReference>
<dbReference type="GO" id="GO:0003723">
    <property type="term" value="F:RNA binding"/>
    <property type="evidence" value="ECO:0007669"/>
    <property type="project" value="UniProtKB-UniRule"/>
</dbReference>
<dbReference type="GO" id="GO:0006353">
    <property type="term" value="P:DNA-templated transcription termination"/>
    <property type="evidence" value="ECO:0007669"/>
    <property type="project" value="UniProtKB-UniRule"/>
</dbReference>
<dbReference type="GO" id="GO:0031564">
    <property type="term" value="P:transcription antitermination"/>
    <property type="evidence" value="ECO:0007669"/>
    <property type="project" value="UniProtKB-KW"/>
</dbReference>
<dbReference type="Gene3D" id="1.10.940.10">
    <property type="entry name" value="NusB-like"/>
    <property type="match status" value="1"/>
</dbReference>
<dbReference type="HAMAP" id="MF_00073">
    <property type="entry name" value="NusB"/>
    <property type="match status" value="1"/>
</dbReference>
<dbReference type="InterPro" id="IPR035926">
    <property type="entry name" value="NusB-like_sf"/>
</dbReference>
<dbReference type="InterPro" id="IPR011605">
    <property type="entry name" value="NusB_fam"/>
</dbReference>
<dbReference type="InterPro" id="IPR006027">
    <property type="entry name" value="NusB_RsmB_TIM44"/>
</dbReference>
<dbReference type="NCBIfam" id="TIGR01951">
    <property type="entry name" value="nusB"/>
    <property type="match status" value="1"/>
</dbReference>
<dbReference type="PANTHER" id="PTHR11078:SF3">
    <property type="entry name" value="ANTITERMINATION NUSB DOMAIN-CONTAINING PROTEIN"/>
    <property type="match status" value="1"/>
</dbReference>
<dbReference type="PANTHER" id="PTHR11078">
    <property type="entry name" value="N UTILIZATION SUBSTANCE PROTEIN B-RELATED"/>
    <property type="match status" value="1"/>
</dbReference>
<dbReference type="Pfam" id="PF01029">
    <property type="entry name" value="NusB"/>
    <property type="match status" value="1"/>
</dbReference>
<dbReference type="SUPFAM" id="SSF48013">
    <property type="entry name" value="NusB-like"/>
    <property type="match status" value="1"/>
</dbReference>
<comment type="function">
    <text evidence="1">Involved in transcription antitermination. Required for transcription of ribosomal RNA (rRNA) genes. Binds specifically to the boxA antiterminator sequence of the ribosomal RNA (rrn) operons.</text>
</comment>
<comment type="similarity">
    <text evidence="1">Belongs to the NusB family.</text>
</comment>
<name>NUSB_MACCJ</name>
<accession>B9E6Q9</accession>
<proteinExistence type="inferred from homology"/>
<sequence length="130" mass="14974">MSRTESREHAIQILFQIENEAHEISVEDATRFIVEPPNRDVFADELVHGVISKQNELDDKITPHLKSWALERLNKIDRIILRLSAFELLYTDAPEKVIVNEAVNLAKKFSDDESYKFINGVLSEIIKNKA</sequence>
<organism>
    <name type="scientific">Macrococcus caseolyticus (strain JCSC5402)</name>
    <name type="common">Macrococcoides caseolyticum</name>
    <dbReference type="NCBI Taxonomy" id="458233"/>
    <lineage>
        <taxon>Bacteria</taxon>
        <taxon>Bacillati</taxon>
        <taxon>Bacillota</taxon>
        <taxon>Bacilli</taxon>
        <taxon>Bacillales</taxon>
        <taxon>Staphylococcaceae</taxon>
        <taxon>Macrococcoides</taxon>
    </lineage>
</organism>